<evidence type="ECO:0000250" key="1">
    <source>
        <dbReference type="UniProtKB" id="P41518"/>
    </source>
</evidence>
<evidence type="ECO:0000269" key="2">
    <source>
    </source>
</evidence>
<evidence type="ECO:0000303" key="3">
    <source>
    </source>
</evidence>
<evidence type="ECO:0000305" key="4"/>
<proteinExistence type="evidence at protein level"/>
<name>TRP2_DELRA</name>
<comment type="function">
    <text evidence="1">Myoactive peptide.</text>
</comment>
<comment type="subcellular location">
    <subcellularLocation>
        <location evidence="1">Secreted</location>
    </subcellularLocation>
</comment>
<comment type="tissue specificity">
    <text evidence="2">Expressed in the CNS and midgut but not in the ring gland, thoracic perisympathetic organs (tPSO) and abdominal perisympathetic organs (aPSO) (at protein level).</text>
</comment>
<comment type="developmental stage">
    <text evidence="2">Detected in larvae.</text>
</comment>
<comment type="mass spectrometry"/>
<keyword id="KW-0027">Amidation</keyword>
<keyword id="KW-0903">Direct protein sequencing</keyword>
<keyword id="KW-0527">Neuropeptide</keyword>
<keyword id="KW-0964">Secreted</keyword>
<organism>
    <name type="scientific">Delia radicum</name>
    <name type="common">Cabbage root fly</name>
    <name type="synonym">Anthomyia brassicae</name>
    <dbReference type="NCBI Taxonomy" id="30064"/>
    <lineage>
        <taxon>Eukaryota</taxon>
        <taxon>Metazoa</taxon>
        <taxon>Ecdysozoa</taxon>
        <taxon>Arthropoda</taxon>
        <taxon>Hexapoda</taxon>
        <taxon>Insecta</taxon>
        <taxon>Pterygota</taxon>
        <taxon>Neoptera</taxon>
        <taxon>Endopterygota</taxon>
        <taxon>Diptera</taxon>
        <taxon>Brachycera</taxon>
        <taxon>Muscomorpha</taxon>
        <taxon>Muscoidea</taxon>
        <taxon>Anthomyiidae</taxon>
        <taxon>Anthomyiinae</taxon>
        <taxon>Delia</taxon>
    </lineage>
</organism>
<reference evidence="4" key="1">
    <citation type="journal article" date="2012" name="PLoS ONE">
        <title>Peptidomics of the agriculturally damaging larval stage of the cabbage root fly Delia radicum (Diptera: Anthomyiidae).</title>
        <authorList>
            <person name="Zoephel J."/>
            <person name="Reiher W."/>
            <person name="Rexer K.-H."/>
            <person name="Kahnt J."/>
            <person name="Wegener C."/>
        </authorList>
    </citation>
    <scope>PROTEIN SEQUENCE</scope>
    <scope>TISSUE SPECIFICITY</scope>
    <scope>DEVELOPMENTAL STAGE</scope>
    <scope>MASS SPECTROMETRY</scope>
    <scope>AMIDATION AT ARG-11</scope>
    <source>
        <tissue evidence="2">CNS</tissue>
        <tissue evidence="2">Midgut</tissue>
    </source>
</reference>
<feature type="peptide" id="PRO_0000419726" description="Tachykinin-related peptide GLGNNAFLGVR-amide" evidence="2">
    <location>
        <begin position="1"/>
        <end position="11"/>
    </location>
</feature>
<feature type="modified residue" description="Arginine amide" evidence="2">
    <location>
        <position position="11"/>
    </location>
</feature>
<feature type="unsure residue" description="L or I" evidence="2">
    <location>
        <position position="2"/>
    </location>
</feature>
<feature type="unsure residue" description="L or I" evidence="2">
    <location>
        <position position="8"/>
    </location>
</feature>
<sequence>GLGNNAFLGVR</sequence>
<accession>B3EWM6</accession>
<protein>
    <recommendedName>
        <fullName evidence="3">Tachykinin-related peptide GLGNNAFLGVR-amide</fullName>
    </recommendedName>
</protein>
<dbReference type="GO" id="GO:0005576">
    <property type="term" value="C:extracellular region"/>
    <property type="evidence" value="ECO:0007669"/>
    <property type="project" value="UniProtKB-SubCell"/>
</dbReference>
<dbReference type="GO" id="GO:0007218">
    <property type="term" value="P:neuropeptide signaling pathway"/>
    <property type="evidence" value="ECO:0007669"/>
    <property type="project" value="UniProtKB-KW"/>
</dbReference>